<protein>
    <recommendedName>
        <fullName evidence="1">Cysteine--tRNA ligase</fullName>
        <ecNumber evidence="1">6.1.1.16</ecNumber>
    </recommendedName>
    <alternativeName>
        <fullName evidence="1">Cysteinyl-tRNA synthetase</fullName>
        <shortName evidence="1">CysRS</shortName>
    </alternativeName>
</protein>
<accession>Q60BG8</accession>
<proteinExistence type="inferred from homology"/>
<dbReference type="EC" id="6.1.1.16" evidence="1"/>
<dbReference type="EMBL" id="AE017282">
    <property type="protein sequence ID" value="AAU93302.1"/>
    <property type="molecule type" value="Genomic_DNA"/>
</dbReference>
<dbReference type="RefSeq" id="WP_010959857.1">
    <property type="nucleotide sequence ID" value="NC_002977.6"/>
</dbReference>
<dbReference type="SMR" id="Q60BG8"/>
<dbReference type="STRING" id="243233.MCA0509"/>
<dbReference type="GeneID" id="88222839"/>
<dbReference type="KEGG" id="mca:MCA0509"/>
<dbReference type="eggNOG" id="COG0215">
    <property type="taxonomic scope" value="Bacteria"/>
</dbReference>
<dbReference type="HOGENOM" id="CLU_013528_0_1_6"/>
<dbReference type="Proteomes" id="UP000006821">
    <property type="component" value="Chromosome"/>
</dbReference>
<dbReference type="GO" id="GO:0005829">
    <property type="term" value="C:cytosol"/>
    <property type="evidence" value="ECO:0007669"/>
    <property type="project" value="TreeGrafter"/>
</dbReference>
<dbReference type="GO" id="GO:0005524">
    <property type="term" value="F:ATP binding"/>
    <property type="evidence" value="ECO:0007669"/>
    <property type="project" value="UniProtKB-UniRule"/>
</dbReference>
<dbReference type="GO" id="GO:0004817">
    <property type="term" value="F:cysteine-tRNA ligase activity"/>
    <property type="evidence" value="ECO:0007669"/>
    <property type="project" value="UniProtKB-UniRule"/>
</dbReference>
<dbReference type="GO" id="GO:0008270">
    <property type="term" value="F:zinc ion binding"/>
    <property type="evidence" value="ECO:0007669"/>
    <property type="project" value="UniProtKB-UniRule"/>
</dbReference>
<dbReference type="GO" id="GO:0006423">
    <property type="term" value="P:cysteinyl-tRNA aminoacylation"/>
    <property type="evidence" value="ECO:0007669"/>
    <property type="project" value="UniProtKB-UniRule"/>
</dbReference>
<dbReference type="CDD" id="cd07963">
    <property type="entry name" value="Anticodon_Ia_Cys"/>
    <property type="match status" value="1"/>
</dbReference>
<dbReference type="CDD" id="cd00672">
    <property type="entry name" value="CysRS_core"/>
    <property type="match status" value="1"/>
</dbReference>
<dbReference type="FunFam" id="3.40.50.620:FF:000009">
    <property type="entry name" value="Cysteine--tRNA ligase"/>
    <property type="match status" value="1"/>
</dbReference>
<dbReference type="Gene3D" id="1.20.120.1910">
    <property type="entry name" value="Cysteine-tRNA ligase, C-terminal anti-codon recognition domain"/>
    <property type="match status" value="1"/>
</dbReference>
<dbReference type="Gene3D" id="3.40.50.620">
    <property type="entry name" value="HUPs"/>
    <property type="match status" value="1"/>
</dbReference>
<dbReference type="HAMAP" id="MF_00041">
    <property type="entry name" value="Cys_tRNA_synth"/>
    <property type="match status" value="1"/>
</dbReference>
<dbReference type="InterPro" id="IPR015803">
    <property type="entry name" value="Cys-tRNA-ligase"/>
</dbReference>
<dbReference type="InterPro" id="IPR015273">
    <property type="entry name" value="Cys-tRNA-synt_Ia_DALR"/>
</dbReference>
<dbReference type="InterPro" id="IPR024909">
    <property type="entry name" value="Cys-tRNA/MSH_ligase"/>
</dbReference>
<dbReference type="InterPro" id="IPR056411">
    <property type="entry name" value="CysS_C"/>
</dbReference>
<dbReference type="InterPro" id="IPR014729">
    <property type="entry name" value="Rossmann-like_a/b/a_fold"/>
</dbReference>
<dbReference type="InterPro" id="IPR032678">
    <property type="entry name" value="tRNA-synt_1_cat_dom"/>
</dbReference>
<dbReference type="InterPro" id="IPR009080">
    <property type="entry name" value="tRNAsynth_Ia_anticodon-bd"/>
</dbReference>
<dbReference type="NCBIfam" id="TIGR00435">
    <property type="entry name" value="cysS"/>
    <property type="match status" value="1"/>
</dbReference>
<dbReference type="PANTHER" id="PTHR10890:SF3">
    <property type="entry name" value="CYSTEINE--TRNA LIGASE, CYTOPLASMIC"/>
    <property type="match status" value="1"/>
</dbReference>
<dbReference type="PANTHER" id="PTHR10890">
    <property type="entry name" value="CYSTEINYL-TRNA SYNTHETASE"/>
    <property type="match status" value="1"/>
</dbReference>
<dbReference type="Pfam" id="PF23493">
    <property type="entry name" value="CysS_C"/>
    <property type="match status" value="1"/>
</dbReference>
<dbReference type="Pfam" id="PF09190">
    <property type="entry name" value="DALR_2"/>
    <property type="match status" value="1"/>
</dbReference>
<dbReference type="Pfam" id="PF01406">
    <property type="entry name" value="tRNA-synt_1e"/>
    <property type="match status" value="1"/>
</dbReference>
<dbReference type="PRINTS" id="PR00983">
    <property type="entry name" value="TRNASYNTHCYS"/>
</dbReference>
<dbReference type="SMART" id="SM00840">
    <property type="entry name" value="DALR_2"/>
    <property type="match status" value="1"/>
</dbReference>
<dbReference type="SUPFAM" id="SSF47323">
    <property type="entry name" value="Anticodon-binding domain of a subclass of class I aminoacyl-tRNA synthetases"/>
    <property type="match status" value="1"/>
</dbReference>
<dbReference type="SUPFAM" id="SSF52374">
    <property type="entry name" value="Nucleotidylyl transferase"/>
    <property type="match status" value="1"/>
</dbReference>
<organism>
    <name type="scientific">Methylococcus capsulatus (strain ATCC 33009 / NCIMB 11132 / Bath)</name>
    <dbReference type="NCBI Taxonomy" id="243233"/>
    <lineage>
        <taxon>Bacteria</taxon>
        <taxon>Pseudomonadati</taxon>
        <taxon>Pseudomonadota</taxon>
        <taxon>Gammaproteobacteria</taxon>
        <taxon>Methylococcales</taxon>
        <taxon>Methylococcaceae</taxon>
        <taxon>Methylococcus</taxon>
    </lineage>
</organism>
<feature type="chain" id="PRO_0000159426" description="Cysteine--tRNA ligase">
    <location>
        <begin position="1"/>
        <end position="465"/>
    </location>
</feature>
<feature type="short sequence motif" description="'HIGH' region">
    <location>
        <begin position="30"/>
        <end position="40"/>
    </location>
</feature>
<feature type="short sequence motif" description="'KMSKS' region">
    <location>
        <begin position="266"/>
        <end position="270"/>
    </location>
</feature>
<feature type="binding site" evidence="1">
    <location>
        <position position="28"/>
    </location>
    <ligand>
        <name>Zn(2+)</name>
        <dbReference type="ChEBI" id="CHEBI:29105"/>
    </ligand>
</feature>
<feature type="binding site" evidence="1">
    <location>
        <position position="209"/>
    </location>
    <ligand>
        <name>Zn(2+)</name>
        <dbReference type="ChEBI" id="CHEBI:29105"/>
    </ligand>
</feature>
<feature type="binding site" evidence="1">
    <location>
        <position position="234"/>
    </location>
    <ligand>
        <name>Zn(2+)</name>
        <dbReference type="ChEBI" id="CHEBI:29105"/>
    </ligand>
</feature>
<feature type="binding site" evidence="1">
    <location>
        <position position="238"/>
    </location>
    <ligand>
        <name>Zn(2+)</name>
        <dbReference type="ChEBI" id="CHEBI:29105"/>
    </ligand>
</feature>
<feature type="binding site" evidence="1">
    <location>
        <position position="269"/>
    </location>
    <ligand>
        <name>ATP</name>
        <dbReference type="ChEBI" id="CHEBI:30616"/>
    </ligand>
</feature>
<keyword id="KW-0030">Aminoacyl-tRNA synthetase</keyword>
<keyword id="KW-0067">ATP-binding</keyword>
<keyword id="KW-0963">Cytoplasm</keyword>
<keyword id="KW-0436">Ligase</keyword>
<keyword id="KW-0479">Metal-binding</keyword>
<keyword id="KW-0547">Nucleotide-binding</keyword>
<keyword id="KW-0648">Protein biosynthesis</keyword>
<keyword id="KW-1185">Reference proteome</keyword>
<keyword id="KW-0862">Zinc</keyword>
<comment type="catalytic activity">
    <reaction evidence="1">
        <text>tRNA(Cys) + L-cysteine + ATP = L-cysteinyl-tRNA(Cys) + AMP + diphosphate</text>
        <dbReference type="Rhea" id="RHEA:17773"/>
        <dbReference type="Rhea" id="RHEA-COMP:9661"/>
        <dbReference type="Rhea" id="RHEA-COMP:9679"/>
        <dbReference type="ChEBI" id="CHEBI:30616"/>
        <dbReference type="ChEBI" id="CHEBI:33019"/>
        <dbReference type="ChEBI" id="CHEBI:35235"/>
        <dbReference type="ChEBI" id="CHEBI:78442"/>
        <dbReference type="ChEBI" id="CHEBI:78517"/>
        <dbReference type="ChEBI" id="CHEBI:456215"/>
        <dbReference type="EC" id="6.1.1.16"/>
    </reaction>
</comment>
<comment type="cofactor">
    <cofactor evidence="1">
        <name>Zn(2+)</name>
        <dbReference type="ChEBI" id="CHEBI:29105"/>
    </cofactor>
    <text evidence="1">Binds 1 zinc ion per subunit.</text>
</comment>
<comment type="subunit">
    <text evidence="1">Monomer.</text>
</comment>
<comment type="subcellular location">
    <subcellularLocation>
        <location evidence="1">Cytoplasm</location>
    </subcellularLocation>
</comment>
<comment type="similarity">
    <text evidence="1">Belongs to the class-I aminoacyl-tRNA synthetase family.</text>
</comment>
<reference key="1">
    <citation type="journal article" date="2004" name="PLoS Biol.">
        <title>Genomic insights into methanotrophy: the complete genome sequence of Methylococcus capsulatus (Bath).</title>
        <authorList>
            <person name="Ward N.L."/>
            <person name="Larsen O."/>
            <person name="Sakwa J."/>
            <person name="Bruseth L."/>
            <person name="Khouri H.M."/>
            <person name="Durkin A.S."/>
            <person name="Dimitrov G."/>
            <person name="Jiang L."/>
            <person name="Scanlan D."/>
            <person name="Kang K.H."/>
            <person name="Lewis M.R."/>
            <person name="Nelson K.E."/>
            <person name="Methe B.A."/>
            <person name="Wu M."/>
            <person name="Heidelberg J.F."/>
            <person name="Paulsen I.T."/>
            <person name="Fouts D.E."/>
            <person name="Ravel J."/>
            <person name="Tettelin H."/>
            <person name="Ren Q."/>
            <person name="Read T.D."/>
            <person name="DeBoy R.T."/>
            <person name="Seshadri R."/>
            <person name="Salzberg S.L."/>
            <person name="Jensen H.B."/>
            <person name="Birkeland N.K."/>
            <person name="Nelson W.C."/>
            <person name="Dodson R.J."/>
            <person name="Grindhaug S.H."/>
            <person name="Holt I.E."/>
            <person name="Eidhammer I."/>
            <person name="Jonasen I."/>
            <person name="Vanaken S."/>
            <person name="Utterback T.R."/>
            <person name="Feldblyum T.V."/>
            <person name="Fraser C.M."/>
            <person name="Lillehaug J.R."/>
            <person name="Eisen J.A."/>
        </authorList>
    </citation>
    <scope>NUCLEOTIDE SEQUENCE [LARGE SCALE GENOMIC DNA]</scope>
    <source>
        <strain>ATCC 33009 / NCIMB 11132 / Bath</strain>
    </source>
</reference>
<evidence type="ECO:0000255" key="1">
    <source>
        <dbReference type="HAMAP-Rule" id="MF_00041"/>
    </source>
</evidence>
<gene>
    <name evidence="1" type="primary">cysS</name>
    <name type="ordered locus">MCA0509</name>
</gene>
<name>SYC_METCA</name>
<sequence length="465" mass="52327">MLKIYNSLTRQKEEFRPLEPRRVRMYVCGMTVYDYCHLGHARVMVVFDMVARYLRHLGLKVTYVRNVTDIDDKIIRRAVENGETIGALTARFIEAMHEDERALGVLPPDHEPRATESIDDILAMIGTLIERGHAYVGSNGDVFYAVASFPNYGRLSGKNLDELRAGERIEVDEAKRDPLDFVLWKSAKPGEPFWASPWGPGRPGWHIECSAMSTRCLGAHFDIHGGGMDLQFPHHENEIAQSEGATGEHFVNYWMHNGFVRINEEKMSKSLGNFFTVREILARYRPEVVRFFILNSHYRSPLNYSDENLDEAAAALSRLYTALRGLAPDLPLPLGEDRDEGFSSRFADAMQDDFNTPEAIAVLFDLAREINRHKAAEPAKAAALGATLKSLGNVLGLLQTDPEAYFKSDAGGSGLSDADIETRIRARLEARKAKNWAESDRIRDELKAQGIILEDSAAGTTWRRE</sequence>